<keyword id="KW-1185">Reference proteome</keyword>
<feature type="chain" id="PRO_1000075548" description="Sugar fermentation stimulation protein homolog">
    <location>
        <begin position="1"/>
        <end position="234"/>
    </location>
</feature>
<sequence length="234" mass="26118">MEFSPAFETGVLVQRYKRFLTDITLDNGEQVTIHCPNTGSMKNCLFPGEKVWFSTSDNPKRKYSRTWELAQTPEGHIIGINTGRANALAEEAIHAGVITELQGYHSLRREVKYGSENSRIDILLEDTKKPNCYIEVKSCTLLEEGQGYFPDAVTARGQKHLRELMEMVEQGQRAVLLFVVQHSGIKSVQAATHIDAEYAELLSKAYHKGVEIIAYSTDSSPLGASLVKSCPVRL</sequence>
<dbReference type="EMBL" id="CP000851">
    <property type="protein sequence ID" value="ABV86026.1"/>
    <property type="molecule type" value="Genomic_DNA"/>
</dbReference>
<dbReference type="RefSeq" id="WP_012153962.1">
    <property type="nucleotide sequence ID" value="NC_009901.1"/>
</dbReference>
<dbReference type="SMR" id="A8H0D9"/>
<dbReference type="STRING" id="398579.Spea_0699"/>
<dbReference type="KEGG" id="spl:Spea_0699"/>
<dbReference type="eggNOG" id="COG1489">
    <property type="taxonomic scope" value="Bacteria"/>
</dbReference>
<dbReference type="HOGENOM" id="CLU_052299_2_0_6"/>
<dbReference type="OrthoDB" id="9802365at2"/>
<dbReference type="Proteomes" id="UP000002608">
    <property type="component" value="Chromosome"/>
</dbReference>
<dbReference type="GO" id="GO:0003677">
    <property type="term" value="F:DNA binding"/>
    <property type="evidence" value="ECO:0007669"/>
    <property type="project" value="InterPro"/>
</dbReference>
<dbReference type="CDD" id="cd22359">
    <property type="entry name" value="SfsA-like_bacterial"/>
    <property type="match status" value="1"/>
</dbReference>
<dbReference type="FunFam" id="2.40.50.580:FF:000001">
    <property type="entry name" value="Sugar fermentation stimulation protein A"/>
    <property type="match status" value="1"/>
</dbReference>
<dbReference type="FunFam" id="3.40.1350.60:FF:000001">
    <property type="entry name" value="Sugar fermentation stimulation protein A"/>
    <property type="match status" value="1"/>
</dbReference>
<dbReference type="Gene3D" id="2.40.50.580">
    <property type="match status" value="1"/>
</dbReference>
<dbReference type="Gene3D" id="3.40.1350.60">
    <property type="match status" value="1"/>
</dbReference>
<dbReference type="HAMAP" id="MF_00095">
    <property type="entry name" value="SfsA"/>
    <property type="match status" value="1"/>
</dbReference>
<dbReference type="InterPro" id="IPR005224">
    <property type="entry name" value="SfsA"/>
</dbReference>
<dbReference type="InterPro" id="IPR040452">
    <property type="entry name" value="SfsA_C"/>
</dbReference>
<dbReference type="InterPro" id="IPR041465">
    <property type="entry name" value="SfsA_N"/>
</dbReference>
<dbReference type="NCBIfam" id="TIGR00230">
    <property type="entry name" value="sfsA"/>
    <property type="match status" value="1"/>
</dbReference>
<dbReference type="PANTHER" id="PTHR30545">
    <property type="entry name" value="SUGAR FERMENTATION STIMULATION PROTEIN A"/>
    <property type="match status" value="1"/>
</dbReference>
<dbReference type="PANTHER" id="PTHR30545:SF2">
    <property type="entry name" value="SUGAR FERMENTATION STIMULATION PROTEIN A"/>
    <property type="match status" value="1"/>
</dbReference>
<dbReference type="Pfam" id="PF03749">
    <property type="entry name" value="SfsA"/>
    <property type="match status" value="1"/>
</dbReference>
<dbReference type="Pfam" id="PF17746">
    <property type="entry name" value="SfsA_N"/>
    <property type="match status" value="1"/>
</dbReference>
<protein>
    <recommendedName>
        <fullName evidence="1">Sugar fermentation stimulation protein homolog</fullName>
    </recommendedName>
</protein>
<gene>
    <name evidence="1" type="primary">sfsA</name>
    <name type="ordered locus">Spea_0699</name>
</gene>
<evidence type="ECO:0000255" key="1">
    <source>
        <dbReference type="HAMAP-Rule" id="MF_00095"/>
    </source>
</evidence>
<proteinExistence type="inferred from homology"/>
<organism>
    <name type="scientific">Shewanella pealeana (strain ATCC 700345 / ANG-SQ1)</name>
    <dbReference type="NCBI Taxonomy" id="398579"/>
    <lineage>
        <taxon>Bacteria</taxon>
        <taxon>Pseudomonadati</taxon>
        <taxon>Pseudomonadota</taxon>
        <taxon>Gammaproteobacteria</taxon>
        <taxon>Alteromonadales</taxon>
        <taxon>Shewanellaceae</taxon>
        <taxon>Shewanella</taxon>
    </lineage>
</organism>
<name>SFSA_SHEPA</name>
<comment type="similarity">
    <text evidence="1">Belongs to the SfsA family.</text>
</comment>
<reference key="1">
    <citation type="submission" date="2007-10" db="EMBL/GenBank/DDBJ databases">
        <title>Complete sequence of Shewanella pealeana ATCC 700345.</title>
        <authorList>
            <consortium name="US DOE Joint Genome Institute"/>
            <person name="Copeland A."/>
            <person name="Lucas S."/>
            <person name="Lapidus A."/>
            <person name="Barry K."/>
            <person name="Glavina del Rio T."/>
            <person name="Dalin E."/>
            <person name="Tice H."/>
            <person name="Pitluck S."/>
            <person name="Chertkov O."/>
            <person name="Brettin T."/>
            <person name="Bruce D."/>
            <person name="Detter J.C."/>
            <person name="Han C."/>
            <person name="Schmutz J."/>
            <person name="Larimer F."/>
            <person name="Land M."/>
            <person name="Hauser L."/>
            <person name="Kyrpides N."/>
            <person name="Kim E."/>
            <person name="Zhao J.-S.Z."/>
            <person name="Manno D."/>
            <person name="Hawari J."/>
            <person name="Richardson P."/>
        </authorList>
    </citation>
    <scope>NUCLEOTIDE SEQUENCE [LARGE SCALE GENOMIC DNA]</scope>
    <source>
        <strain>ATCC 700345 / ANG-SQ1</strain>
    </source>
</reference>
<accession>A8H0D9</accession>